<dbReference type="EC" id="4.6.1.17" evidence="1"/>
<dbReference type="EMBL" id="CP001052">
    <property type="protein sequence ID" value="ACD17678.1"/>
    <property type="molecule type" value="Genomic_DNA"/>
</dbReference>
<dbReference type="RefSeq" id="WP_012434247.1">
    <property type="nucleotide sequence ID" value="NC_010681.1"/>
</dbReference>
<dbReference type="SMR" id="B2SYE3"/>
<dbReference type="STRING" id="398527.Bphyt_3287"/>
<dbReference type="KEGG" id="bpy:Bphyt_3287"/>
<dbReference type="eggNOG" id="COG0315">
    <property type="taxonomic scope" value="Bacteria"/>
</dbReference>
<dbReference type="HOGENOM" id="CLU_074693_1_1_4"/>
<dbReference type="OrthoDB" id="9794429at2"/>
<dbReference type="UniPathway" id="UPA00344"/>
<dbReference type="Proteomes" id="UP000001739">
    <property type="component" value="Chromosome 1"/>
</dbReference>
<dbReference type="GO" id="GO:0061799">
    <property type="term" value="F:cyclic pyranopterin monophosphate synthase activity"/>
    <property type="evidence" value="ECO:0007669"/>
    <property type="project" value="UniProtKB-UniRule"/>
</dbReference>
<dbReference type="GO" id="GO:0006777">
    <property type="term" value="P:Mo-molybdopterin cofactor biosynthetic process"/>
    <property type="evidence" value="ECO:0007669"/>
    <property type="project" value="UniProtKB-UniRule"/>
</dbReference>
<dbReference type="CDD" id="cd01420">
    <property type="entry name" value="MoaC_PE"/>
    <property type="match status" value="1"/>
</dbReference>
<dbReference type="Gene3D" id="3.30.70.640">
    <property type="entry name" value="Molybdopterin cofactor biosynthesis C (MoaC) domain"/>
    <property type="match status" value="1"/>
</dbReference>
<dbReference type="HAMAP" id="MF_01224_B">
    <property type="entry name" value="MoaC_B"/>
    <property type="match status" value="1"/>
</dbReference>
<dbReference type="InterPro" id="IPR023045">
    <property type="entry name" value="MoaC"/>
</dbReference>
<dbReference type="InterPro" id="IPR047594">
    <property type="entry name" value="MoaC_bact/euk"/>
</dbReference>
<dbReference type="InterPro" id="IPR036522">
    <property type="entry name" value="MoaC_sf"/>
</dbReference>
<dbReference type="InterPro" id="IPR050105">
    <property type="entry name" value="MoCo_biosynth_MoaA/MoaC"/>
</dbReference>
<dbReference type="InterPro" id="IPR002820">
    <property type="entry name" value="Mopterin_CF_biosynth-C_dom"/>
</dbReference>
<dbReference type="NCBIfam" id="TIGR00581">
    <property type="entry name" value="moaC"/>
    <property type="match status" value="1"/>
</dbReference>
<dbReference type="NCBIfam" id="NF006870">
    <property type="entry name" value="PRK09364.1"/>
    <property type="match status" value="1"/>
</dbReference>
<dbReference type="PANTHER" id="PTHR22960">
    <property type="entry name" value="MOLYBDOPTERIN COFACTOR SYNTHESIS PROTEIN A"/>
    <property type="match status" value="1"/>
</dbReference>
<dbReference type="Pfam" id="PF01967">
    <property type="entry name" value="MoaC"/>
    <property type="match status" value="1"/>
</dbReference>
<dbReference type="SUPFAM" id="SSF55040">
    <property type="entry name" value="Molybdenum cofactor biosynthesis protein C, MoaC"/>
    <property type="match status" value="1"/>
</dbReference>
<sequence>MPELTHFDAAGQAHMVDVGGKQETRRIAIARGSIRMLPETFALIRDGNAKKGDVIGIARIAAIQGSKRTADLIPLCHPLALTRVKVDFELDDTLPGVHCTVQVETLGRTGVEMEALTAVQVGLLTVYDMCKAVDRGMTITDVRVLEKHGGKSGDWVAG</sequence>
<proteinExistence type="inferred from homology"/>
<gene>
    <name evidence="1" type="primary">moaC</name>
    <name type="ordered locus">Bphyt_3287</name>
</gene>
<keyword id="KW-0456">Lyase</keyword>
<keyword id="KW-0501">Molybdenum cofactor biosynthesis</keyword>
<evidence type="ECO:0000255" key="1">
    <source>
        <dbReference type="HAMAP-Rule" id="MF_01224"/>
    </source>
</evidence>
<comment type="function">
    <text evidence="1">Catalyzes the conversion of (8S)-3',8-cyclo-7,8-dihydroguanosine 5'-triphosphate to cyclic pyranopterin monophosphate (cPMP).</text>
</comment>
<comment type="catalytic activity">
    <reaction evidence="1">
        <text>(8S)-3',8-cyclo-7,8-dihydroguanosine 5'-triphosphate = cyclic pyranopterin phosphate + diphosphate</text>
        <dbReference type="Rhea" id="RHEA:49580"/>
        <dbReference type="ChEBI" id="CHEBI:33019"/>
        <dbReference type="ChEBI" id="CHEBI:59648"/>
        <dbReference type="ChEBI" id="CHEBI:131766"/>
        <dbReference type="EC" id="4.6.1.17"/>
    </reaction>
</comment>
<comment type="pathway">
    <text evidence="1">Cofactor biosynthesis; molybdopterin biosynthesis.</text>
</comment>
<comment type="subunit">
    <text evidence="1">Homohexamer; trimer of dimers.</text>
</comment>
<comment type="similarity">
    <text evidence="1">Belongs to the MoaC family.</text>
</comment>
<accession>B2SYE3</accession>
<name>MOAC_PARPJ</name>
<feature type="chain" id="PRO_1000139255" description="Cyclic pyranopterin monophosphate synthase">
    <location>
        <begin position="1"/>
        <end position="158"/>
    </location>
</feature>
<feature type="active site" evidence="1">
    <location>
        <position position="128"/>
    </location>
</feature>
<feature type="binding site" evidence="1">
    <location>
        <begin position="75"/>
        <end position="77"/>
    </location>
    <ligand>
        <name>substrate</name>
    </ligand>
</feature>
<feature type="binding site" evidence="1">
    <location>
        <begin position="113"/>
        <end position="114"/>
    </location>
    <ligand>
        <name>substrate</name>
    </ligand>
</feature>
<reference key="1">
    <citation type="journal article" date="2011" name="J. Bacteriol.">
        <title>Complete genome sequence of the plant growth-promoting endophyte Burkholderia phytofirmans strain PsJN.</title>
        <authorList>
            <person name="Weilharter A."/>
            <person name="Mitter B."/>
            <person name="Shin M.V."/>
            <person name="Chain P.S."/>
            <person name="Nowak J."/>
            <person name="Sessitsch A."/>
        </authorList>
    </citation>
    <scope>NUCLEOTIDE SEQUENCE [LARGE SCALE GENOMIC DNA]</scope>
    <source>
        <strain>DSM 17436 / LMG 22146 / PsJN</strain>
    </source>
</reference>
<organism>
    <name type="scientific">Paraburkholderia phytofirmans (strain DSM 17436 / LMG 22146 / PsJN)</name>
    <name type="common">Burkholderia phytofirmans</name>
    <dbReference type="NCBI Taxonomy" id="398527"/>
    <lineage>
        <taxon>Bacteria</taxon>
        <taxon>Pseudomonadati</taxon>
        <taxon>Pseudomonadota</taxon>
        <taxon>Betaproteobacteria</taxon>
        <taxon>Burkholderiales</taxon>
        <taxon>Burkholderiaceae</taxon>
        <taxon>Paraburkholderia</taxon>
    </lineage>
</organism>
<protein>
    <recommendedName>
        <fullName evidence="1">Cyclic pyranopterin monophosphate synthase</fullName>
        <ecNumber evidence="1">4.6.1.17</ecNumber>
    </recommendedName>
    <alternativeName>
        <fullName evidence="1">Molybdenum cofactor biosynthesis protein C</fullName>
    </alternativeName>
</protein>